<accession>B5ZNW9</accession>
<protein>
    <recommendedName>
        <fullName evidence="1">Protein ApaG</fullName>
    </recommendedName>
</protein>
<sequence>MYRALTKDIEVVVEPFYLEEQSDPEDDRYVWGYRIVISNNSAIAVRLVNRYWNITDQNGQVDEVTGPGVVGEQPRLSPGDTYEYSSGCPLDTPSGLMFGHYQMETDEGEMFDVDIPAFSLDSPGLLRVLN</sequence>
<dbReference type="EMBL" id="CP001191">
    <property type="protein sequence ID" value="ACI53479.1"/>
    <property type="molecule type" value="Genomic_DNA"/>
</dbReference>
<dbReference type="RefSeq" id="WP_003588769.1">
    <property type="nucleotide sequence ID" value="NC_011369.1"/>
</dbReference>
<dbReference type="SMR" id="B5ZNW9"/>
<dbReference type="STRING" id="395492.Rleg2_0179"/>
<dbReference type="KEGG" id="rlt:Rleg2_0179"/>
<dbReference type="eggNOG" id="COG2967">
    <property type="taxonomic scope" value="Bacteria"/>
</dbReference>
<dbReference type="HOGENOM" id="CLU_128074_1_0_5"/>
<dbReference type="Proteomes" id="UP000008330">
    <property type="component" value="Chromosome"/>
</dbReference>
<dbReference type="GO" id="GO:0070987">
    <property type="term" value="P:error-free translesion synthesis"/>
    <property type="evidence" value="ECO:0007669"/>
    <property type="project" value="TreeGrafter"/>
</dbReference>
<dbReference type="Gene3D" id="2.60.40.1470">
    <property type="entry name" value="ApaG domain"/>
    <property type="match status" value="1"/>
</dbReference>
<dbReference type="HAMAP" id="MF_00791">
    <property type="entry name" value="ApaG"/>
    <property type="match status" value="1"/>
</dbReference>
<dbReference type="InterPro" id="IPR007474">
    <property type="entry name" value="ApaG_domain"/>
</dbReference>
<dbReference type="InterPro" id="IPR036767">
    <property type="entry name" value="ApaG_sf"/>
</dbReference>
<dbReference type="InterPro" id="IPR023065">
    <property type="entry name" value="Uncharacterised_ApaG"/>
</dbReference>
<dbReference type="NCBIfam" id="NF003967">
    <property type="entry name" value="PRK05461.1"/>
    <property type="match status" value="1"/>
</dbReference>
<dbReference type="PANTHER" id="PTHR14289">
    <property type="entry name" value="F-BOX ONLY PROTEIN 3"/>
    <property type="match status" value="1"/>
</dbReference>
<dbReference type="PANTHER" id="PTHR14289:SF16">
    <property type="entry name" value="POLYMERASE DELTA-INTERACTING PROTEIN 2"/>
    <property type="match status" value="1"/>
</dbReference>
<dbReference type="Pfam" id="PF04379">
    <property type="entry name" value="DUF525"/>
    <property type="match status" value="1"/>
</dbReference>
<dbReference type="SUPFAM" id="SSF110069">
    <property type="entry name" value="ApaG-like"/>
    <property type="match status" value="1"/>
</dbReference>
<dbReference type="PROSITE" id="PS51087">
    <property type="entry name" value="APAG"/>
    <property type="match status" value="1"/>
</dbReference>
<feature type="chain" id="PRO_1000133804" description="Protein ApaG">
    <location>
        <begin position="1"/>
        <end position="130"/>
    </location>
</feature>
<feature type="domain" description="ApaG" evidence="1">
    <location>
        <begin position="3"/>
        <end position="127"/>
    </location>
</feature>
<name>APAG_RHILW</name>
<keyword id="KW-1185">Reference proteome</keyword>
<evidence type="ECO:0000255" key="1">
    <source>
        <dbReference type="HAMAP-Rule" id="MF_00791"/>
    </source>
</evidence>
<gene>
    <name evidence="1" type="primary">apaG</name>
    <name type="ordered locus">Rleg2_0179</name>
</gene>
<reference key="1">
    <citation type="journal article" date="2010" name="Stand. Genomic Sci.">
        <title>Complete genome sequence of Rhizobium leguminosarum bv trifolii strain WSM2304, an effective microsymbiont of the South American clover Trifolium polymorphum.</title>
        <authorList>
            <person name="Reeve W."/>
            <person name="O'Hara G."/>
            <person name="Chain P."/>
            <person name="Ardley J."/>
            <person name="Brau L."/>
            <person name="Nandesena K."/>
            <person name="Tiwari R."/>
            <person name="Malfatti S."/>
            <person name="Kiss H."/>
            <person name="Lapidus A."/>
            <person name="Copeland A."/>
            <person name="Nolan M."/>
            <person name="Land M."/>
            <person name="Ivanova N."/>
            <person name="Mavromatis K."/>
            <person name="Markowitz V."/>
            <person name="Kyrpides N."/>
            <person name="Melino V."/>
            <person name="Denton M."/>
            <person name="Yates R."/>
            <person name="Howieson J."/>
        </authorList>
    </citation>
    <scope>NUCLEOTIDE SEQUENCE [LARGE SCALE GENOMIC DNA]</scope>
    <source>
        <strain>WSM2304</strain>
    </source>
</reference>
<organism>
    <name type="scientific">Rhizobium leguminosarum bv. trifolii (strain WSM2304)</name>
    <dbReference type="NCBI Taxonomy" id="395492"/>
    <lineage>
        <taxon>Bacteria</taxon>
        <taxon>Pseudomonadati</taxon>
        <taxon>Pseudomonadota</taxon>
        <taxon>Alphaproteobacteria</taxon>
        <taxon>Hyphomicrobiales</taxon>
        <taxon>Rhizobiaceae</taxon>
        <taxon>Rhizobium/Agrobacterium group</taxon>
        <taxon>Rhizobium</taxon>
    </lineage>
</organism>
<proteinExistence type="inferred from homology"/>